<accession>A6TZP0</accession>
<name>LGT_STAA2</name>
<evidence type="ECO:0000255" key="1">
    <source>
        <dbReference type="HAMAP-Rule" id="MF_01147"/>
    </source>
</evidence>
<gene>
    <name evidence="1" type="primary">lgt</name>
    <name type="ordered locus">SaurJH1_0802</name>
</gene>
<organism>
    <name type="scientific">Staphylococcus aureus (strain JH1)</name>
    <dbReference type="NCBI Taxonomy" id="359787"/>
    <lineage>
        <taxon>Bacteria</taxon>
        <taxon>Bacillati</taxon>
        <taxon>Bacillota</taxon>
        <taxon>Bacilli</taxon>
        <taxon>Bacillales</taxon>
        <taxon>Staphylococcaceae</taxon>
        <taxon>Staphylococcus</taxon>
    </lineage>
</organism>
<protein>
    <recommendedName>
        <fullName evidence="1">Phosphatidylglycerol--prolipoprotein diacylglyceryl transferase</fullName>
        <ecNumber evidence="1">2.5.1.145</ecNumber>
    </recommendedName>
</protein>
<comment type="function">
    <text evidence="1">Catalyzes the transfer of the diacylglyceryl group from phosphatidylglycerol to the sulfhydryl group of the N-terminal cysteine of a prolipoprotein, the first step in the formation of mature lipoproteins.</text>
</comment>
<comment type="catalytic activity">
    <reaction evidence="1">
        <text>L-cysteinyl-[prolipoprotein] + a 1,2-diacyl-sn-glycero-3-phospho-(1'-sn-glycerol) = an S-1,2-diacyl-sn-glyceryl-L-cysteinyl-[prolipoprotein] + sn-glycerol 1-phosphate + H(+)</text>
        <dbReference type="Rhea" id="RHEA:56712"/>
        <dbReference type="Rhea" id="RHEA-COMP:14679"/>
        <dbReference type="Rhea" id="RHEA-COMP:14680"/>
        <dbReference type="ChEBI" id="CHEBI:15378"/>
        <dbReference type="ChEBI" id="CHEBI:29950"/>
        <dbReference type="ChEBI" id="CHEBI:57685"/>
        <dbReference type="ChEBI" id="CHEBI:64716"/>
        <dbReference type="ChEBI" id="CHEBI:140658"/>
        <dbReference type="EC" id="2.5.1.145"/>
    </reaction>
</comment>
<comment type="pathway">
    <text evidence="1">Protein modification; lipoprotein biosynthesis (diacylglyceryl transfer).</text>
</comment>
<comment type="subcellular location">
    <subcellularLocation>
        <location evidence="1">Cell membrane</location>
        <topology evidence="1">Multi-pass membrane protein</topology>
    </subcellularLocation>
</comment>
<comment type="similarity">
    <text evidence="1">Belongs to the Lgt family.</text>
</comment>
<feature type="chain" id="PRO_1000085085" description="Phosphatidylglycerol--prolipoprotein diacylglyceryl transferase">
    <location>
        <begin position="1"/>
        <end position="279"/>
    </location>
</feature>
<feature type="transmembrane region" description="Helical" evidence="1">
    <location>
        <begin position="18"/>
        <end position="38"/>
    </location>
</feature>
<feature type="transmembrane region" description="Helical" evidence="1">
    <location>
        <begin position="55"/>
        <end position="75"/>
    </location>
</feature>
<feature type="transmembrane region" description="Helical" evidence="1">
    <location>
        <begin position="89"/>
        <end position="109"/>
    </location>
</feature>
<feature type="transmembrane region" description="Helical" evidence="1">
    <location>
        <begin position="203"/>
        <end position="223"/>
    </location>
</feature>
<feature type="transmembrane region" description="Helical" evidence="1">
    <location>
        <begin position="235"/>
        <end position="255"/>
    </location>
</feature>
<feature type="binding site" evidence="1">
    <location>
        <position position="137"/>
    </location>
    <ligand>
        <name>a 1,2-diacyl-sn-glycero-3-phospho-(1'-sn-glycerol)</name>
        <dbReference type="ChEBI" id="CHEBI:64716"/>
    </ligand>
</feature>
<proteinExistence type="inferred from homology"/>
<dbReference type="EC" id="2.5.1.145" evidence="1"/>
<dbReference type="EMBL" id="CP000736">
    <property type="protein sequence ID" value="ABR51658.1"/>
    <property type="molecule type" value="Genomic_DNA"/>
</dbReference>
<dbReference type="SMR" id="A6TZP0"/>
<dbReference type="KEGG" id="sah:SaurJH1_0802"/>
<dbReference type="HOGENOM" id="CLU_013386_0_1_9"/>
<dbReference type="UniPathway" id="UPA00664"/>
<dbReference type="GO" id="GO:0005886">
    <property type="term" value="C:plasma membrane"/>
    <property type="evidence" value="ECO:0007669"/>
    <property type="project" value="UniProtKB-SubCell"/>
</dbReference>
<dbReference type="GO" id="GO:0008961">
    <property type="term" value="F:phosphatidylglycerol-prolipoprotein diacylglyceryl transferase activity"/>
    <property type="evidence" value="ECO:0007669"/>
    <property type="project" value="UniProtKB-UniRule"/>
</dbReference>
<dbReference type="GO" id="GO:0042158">
    <property type="term" value="P:lipoprotein biosynthetic process"/>
    <property type="evidence" value="ECO:0007669"/>
    <property type="project" value="UniProtKB-UniRule"/>
</dbReference>
<dbReference type="HAMAP" id="MF_01147">
    <property type="entry name" value="Lgt"/>
    <property type="match status" value="1"/>
</dbReference>
<dbReference type="InterPro" id="IPR001640">
    <property type="entry name" value="Lgt"/>
</dbReference>
<dbReference type="NCBIfam" id="TIGR00544">
    <property type="entry name" value="lgt"/>
    <property type="match status" value="1"/>
</dbReference>
<dbReference type="PANTHER" id="PTHR30589:SF0">
    <property type="entry name" value="PHOSPHATIDYLGLYCEROL--PROLIPOPROTEIN DIACYLGLYCERYL TRANSFERASE"/>
    <property type="match status" value="1"/>
</dbReference>
<dbReference type="PANTHER" id="PTHR30589">
    <property type="entry name" value="PROLIPOPROTEIN DIACYLGLYCERYL TRANSFERASE"/>
    <property type="match status" value="1"/>
</dbReference>
<dbReference type="Pfam" id="PF01790">
    <property type="entry name" value="LGT"/>
    <property type="match status" value="1"/>
</dbReference>
<dbReference type="PROSITE" id="PS01311">
    <property type="entry name" value="LGT"/>
    <property type="match status" value="1"/>
</dbReference>
<keyword id="KW-1003">Cell membrane</keyword>
<keyword id="KW-0472">Membrane</keyword>
<keyword id="KW-0808">Transferase</keyword>
<keyword id="KW-0812">Transmembrane</keyword>
<keyword id="KW-1133">Transmembrane helix</keyword>
<reference key="1">
    <citation type="submission" date="2007-06" db="EMBL/GenBank/DDBJ databases">
        <title>Complete sequence of chromosome of Staphylococcus aureus subsp. aureus JH1.</title>
        <authorList>
            <consortium name="US DOE Joint Genome Institute"/>
            <person name="Copeland A."/>
            <person name="Lucas S."/>
            <person name="Lapidus A."/>
            <person name="Barry K."/>
            <person name="Detter J.C."/>
            <person name="Glavina del Rio T."/>
            <person name="Hammon N."/>
            <person name="Israni S."/>
            <person name="Dalin E."/>
            <person name="Tice H."/>
            <person name="Pitluck S."/>
            <person name="Chain P."/>
            <person name="Malfatti S."/>
            <person name="Shin M."/>
            <person name="Vergez L."/>
            <person name="Schmutz J."/>
            <person name="Larimer F."/>
            <person name="Land M."/>
            <person name="Hauser L."/>
            <person name="Kyrpides N."/>
            <person name="Ivanova N."/>
            <person name="Tomasz A."/>
            <person name="Richardson P."/>
        </authorList>
    </citation>
    <scope>NUCLEOTIDE SEQUENCE [LARGE SCALE GENOMIC DNA]</scope>
    <source>
        <strain>JH1</strain>
    </source>
</reference>
<sequence>MGIVFNYIDPVAFNLGPLSVRWYGIIIAVGILLGYFVAQRALVKAGLHKDTLVDIIFYSALFGFIAARIYFVIFQWPYYAENPSEIIKIWHGGIAIHGGLIGGFIAGVIVCKVKNLNPFQIGDIVAPSIILAQGIGRWGNFMNHEAHGGPVSRAFLEQLHLPNFIIENMYINGQYYHPTFLYESIWDVAGFIILVNIRKHLKLGETFFLYLTWYSIGRFFIEGLRTDSLMLTSNIRVAQLVSILLILISISLIVYRRIKYNPPLYSKVGALPWPTKKVK</sequence>